<dbReference type="EMBL" id="AL590451">
    <property type="protein sequence ID" value="CAD27011.1"/>
    <property type="molecule type" value="Genomic_DNA"/>
</dbReference>
<dbReference type="RefSeq" id="XP_955592.1">
    <property type="nucleotide sequence ID" value="XM_950499.1"/>
</dbReference>
<dbReference type="PDB" id="7QEP">
    <property type="method" value="EM"/>
    <property type="resolution" value="2.70 A"/>
    <property type="chains" value="O9=1-52"/>
</dbReference>
<dbReference type="PDBsum" id="7QEP"/>
<dbReference type="EMDB" id="EMD-13936"/>
<dbReference type="SMR" id="Q8SQP8"/>
<dbReference type="FunCoup" id="Q8SQP8">
    <property type="interactions" value="97"/>
</dbReference>
<dbReference type="STRING" id="284813.Q8SQP8"/>
<dbReference type="VEuPathDB" id="MicrosporidiaDB:ECU09_0395"/>
<dbReference type="HOGENOM" id="CLU_181948_2_0_1"/>
<dbReference type="InParanoid" id="Q8SQP8"/>
<dbReference type="OMA" id="HYNTKRR"/>
<dbReference type="OrthoDB" id="6332053at2759"/>
<dbReference type="Proteomes" id="UP000000819">
    <property type="component" value="Chromosome IX"/>
</dbReference>
<dbReference type="GO" id="GO:1990904">
    <property type="term" value="C:ribonucleoprotein complex"/>
    <property type="evidence" value="ECO:0007669"/>
    <property type="project" value="UniProtKB-KW"/>
</dbReference>
<dbReference type="GO" id="GO:0005840">
    <property type="term" value="C:ribosome"/>
    <property type="evidence" value="ECO:0007669"/>
    <property type="project" value="UniProtKB-KW"/>
</dbReference>
<dbReference type="GO" id="GO:0003735">
    <property type="term" value="F:structural constituent of ribosome"/>
    <property type="evidence" value="ECO:0007669"/>
    <property type="project" value="InterPro"/>
</dbReference>
<dbReference type="GO" id="GO:0006412">
    <property type="term" value="P:translation"/>
    <property type="evidence" value="ECO:0007669"/>
    <property type="project" value="InterPro"/>
</dbReference>
<dbReference type="Gene3D" id="1.10.1620.10">
    <property type="entry name" value="Ribosomal protein L39e"/>
    <property type="match status" value="1"/>
</dbReference>
<dbReference type="HAMAP" id="MF_00629">
    <property type="entry name" value="Ribosomal_eL39"/>
    <property type="match status" value="1"/>
</dbReference>
<dbReference type="InterPro" id="IPR000077">
    <property type="entry name" value="Ribosomal_eL39"/>
</dbReference>
<dbReference type="InterPro" id="IPR020083">
    <property type="entry name" value="Ribosomal_eL39_CS"/>
</dbReference>
<dbReference type="InterPro" id="IPR023626">
    <property type="entry name" value="Ribosomal_eL39_dom_sf"/>
</dbReference>
<dbReference type="Pfam" id="PF00832">
    <property type="entry name" value="Ribosomal_L39"/>
    <property type="match status" value="1"/>
</dbReference>
<dbReference type="SUPFAM" id="SSF48662">
    <property type="entry name" value="Ribosomal protein L39e"/>
    <property type="match status" value="1"/>
</dbReference>
<dbReference type="PROSITE" id="PS00051">
    <property type="entry name" value="RIBOSOMAL_L39E"/>
    <property type="match status" value="1"/>
</dbReference>
<proteinExistence type="evidence at protein level"/>
<protein>
    <recommendedName>
        <fullName evidence="2">Large ribosomal subunit protein eL39</fullName>
    </recommendedName>
    <alternativeName>
        <fullName>60S ribosomal protein L39</fullName>
    </alternativeName>
</protein>
<reference key="1">
    <citation type="journal article" date="2001" name="Nature">
        <title>Genome sequence and gene compaction of the eukaryote parasite Encephalitozoon cuniculi.</title>
        <authorList>
            <person name="Katinka M.D."/>
            <person name="Duprat S."/>
            <person name="Cornillot E."/>
            <person name="Metenier G."/>
            <person name="Thomarat F."/>
            <person name="Prensier G."/>
            <person name="Barbe V."/>
            <person name="Peyretaillade E."/>
            <person name="Brottier P."/>
            <person name="Wincker P."/>
            <person name="Delbac F."/>
            <person name="El Alaoui H."/>
            <person name="Peyret P."/>
            <person name="Saurin W."/>
            <person name="Gouy M."/>
            <person name="Weissenbach J."/>
            <person name="Vivares C.P."/>
        </authorList>
    </citation>
    <scope>NUCLEOTIDE SEQUENCE [LARGE SCALE GENOMIC DNA]</scope>
    <source>
        <strain>GB-M1</strain>
    </source>
</reference>
<feature type="chain" id="PRO_0000127037" description="Large ribosomal subunit protein eL39">
    <location>
        <begin position="1"/>
        <end position="52"/>
    </location>
</feature>
<comment type="subunit">
    <text evidence="1">Interacts with YIH1.</text>
</comment>
<comment type="similarity">
    <text evidence="2">Belongs to the eukaryotic ribosomal protein eL39 family.</text>
</comment>
<organism>
    <name type="scientific">Encephalitozoon cuniculi (strain GB-M1)</name>
    <name type="common">Microsporidian parasite</name>
    <dbReference type="NCBI Taxonomy" id="284813"/>
    <lineage>
        <taxon>Eukaryota</taxon>
        <taxon>Fungi</taxon>
        <taxon>Fungi incertae sedis</taxon>
        <taxon>Microsporidia</taxon>
        <taxon>Unikaryonidae</taxon>
        <taxon>Encephalitozoon</taxon>
    </lineage>
</organism>
<sequence>MGSRKTALVKTRLMRALKRNREIPAWKRMMKEHKGEYNRARRHWRSKKLKIY</sequence>
<evidence type="ECO:0000250" key="1">
    <source>
        <dbReference type="UniProtKB" id="P04650"/>
    </source>
</evidence>
<evidence type="ECO:0000305" key="2"/>
<accession>Q8SQP8</accession>
<gene>
    <name type="primary">RPL39</name>
    <name type="ordered locus">ECU09_0395</name>
</gene>
<name>RL39_ENCCU</name>
<keyword id="KW-0002">3D-structure</keyword>
<keyword id="KW-1185">Reference proteome</keyword>
<keyword id="KW-0687">Ribonucleoprotein</keyword>
<keyword id="KW-0689">Ribosomal protein</keyword>